<dbReference type="EMBL" id="M27323">
    <property type="protein sequence ID" value="AAA44872.1"/>
    <property type="molecule type" value="Genomic_DNA"/>
</dbReference>
<dbReference type="PIR" id="JQ0070">
    <property type="entry name" value="ASLJNK"/>
</dbReference>
<dbReference type="Proteomes" id="UP000172620">
    <property type="component" value="Segment"/>
</dbReference>
<dbReference type="GO" id="GO:0033644">
    <property type="term" value="C:host cell membrane"/>
    <property type="evidence" value="ECO:0007669"/>
    <property type="project" value="UniProtKB-SubCell"/>
</dbReference>
<dbReference type="GO" id="GO:0016020">
    <property type="term" value="C:membrane"/>
    <property type="evidence" value="ECO:0007669"/>
    <property type="project" value="UniProtKB-UniRule"/>
</dbReference>
<dbReference type="GO" id="GO:0042609">
    <property type="term" value="F:CD4 receptor binding"/>
    <property type="evidence" value="ECO:0007669"/>
    <property type="project" value="UniProtKB-UniRule"/>
</dbReference>
<dbReference type="GO" id="GO:0005261">
    <property type="term" value="F:monoatomic cation channel activity"/>
    <property type="evidence" value="ECO:0007669"/>
    <property type="project" value="UniProtKB-UniRule"/>
</dbReference>
<dbReference type="GO" id="GO:0032801">
    <property type="term" value="P:receptor catabolic process"/>
    <property type="evidence" value="ECO:0007669"/>
    <property type="project" value="UniProtKB-UniRule"/>
</dbReference>
<dbReference type="GO" id="GO:0052170">
    <property type="term" value="P:symbiont-mediated suppression of host innate immune response"/>
    <property type="evidence" value="ECO:0007669"/>
    <property type="project" value="UniProtKB-KW"/>
</dbReference>
<dbReference type="GO" id="GO:0039502">
    <property type="term" value="P:symbiont-mediated suppression of host type I interferon-mediated signaling pathway"/>
    <property type="evidence" value="ECO:0007669"/>
    <property type="project" value="UniProtKB-UniRule"/>
</dbReference>
<dbReference type="GO" id="GO:0039587">
    <property type="term" value="P:symbiont-mediated-mediated suppression of host tetherin activity"/>
    <property type="evidence" value="ECO:0007669"/>
    <property type="project" value="UniProtKB-UniRule"/>
</dbReference>
<dbReference type="GO" id="GO:0019076">
    <property type="term" value="P:viral release from host cell"/>
    <property type="evidence" value="ECO:0007669"/>
    <property type="project" value="UniProtKB-UniRule"/>
</dbReference>
<dbReference type="Gene3D" id="1.10.195.10">
    <property type="entry name" value="HIV-1 VPU cytoplasmic domain"/>
    <property type="match status" value="1"/>
</dbReference>
<dbReference type="HAMAP" id="MF_04082">
    <property type="entry name" value="HIV_VPU"/>
    <property type="match status" value="1"/>
</dbReference>
<dbReference type="InterPro" id="IPR008187">
    <property type="entry name" value="Vpu"/>
</dbReference>
<dbReference type="InterPro" id="IPR009032">
    <property type="entry name" value="Vpu_cyt_dom_sf"/>
</dbReference>
<dbReference type="Pfam" id="PF00558">
    <property type="entry name" value="Vpu"/>
    <property type="match status" value="1"/>
</dbReference>
<dbReference type="SUPFAM" id="SSF57647">
    <property type="entry name" value="HIV-1 VPU cytoplasmic domain"/>
    <property type="match status" value="1"/>
</dbReference>
<organism>
    <name type="scientific">Human immunodeficiency virus type 1 group M subtype D (isolate NDK)</name>
    <name type="common">HIV-1</name>
    <dbReference type="NCBI Taxonomy" id="11695"/>
    <lineage>
        <taxon>Viruses</taxon>
        <taxon>Riboviria</taxon>
        <taxon>Pararnavirae</taxon>
        <taxon>Artverviricota</taxon>
        <taxon>Revtraviricetes</taxon>
        <taxon>Ortervirales</taxon>
        <taxon>Retroviridae</taxon>
        <taxon>Orthoretrovirinae</taxon>
        <taxon>Lentivirus</taxon>
        <taxon>Human immunodeficiency virus type 1</taxon>
    </lineage>
</organism>
<gene>
    <name evidence="1" type="primary">vpu</name>
</gene>
<feature type="chain" id="PRO_0000085425" description="Protein Vpu">
    <location>
        <begin position="1"/>
        <end position="81"/>
    </location>
</feature>
<feature type="topological domain" description="Extracellular" evidence="1">
    <location>
        <begin position="1"/>
        <end position="7"/>
    </location>
</feature>
<feature type="transmembrane region" description="Helical" evidence="1">
    <location>
        <begin position="8"/>
        <end position="28"/>
    </location>
</feature>
<feature type="topological domain" description="Cytoplasmic" evidence="1">
    <location>
        <begin position="29"/>
        <end position="81"/>
    </location>
</feature>
<feature type="region of interest" description="Disordered" evidence="2">
    <location>
        <begin position="50"/>
        <end position="81"/>
    </location>
</feature>
<feature type="compositionally biased region" description="Basic and acidic residues" evidence="2">
    <location>
        <begin position="62"/>
        <end position="81"/>
    </location>
</feature>
<feature type="modified residue" description="Phosphoserine; by host CK2" evidence="1">
    <location>
        <position position="53"/>
    </location>
</feature>
<feature type="modified residue" description="Phosphoserine; by host CK2" evidence="1">
    <location>
        <position position="57"/>
    </location>
</feature>
<comment type="function">
    <text evidence="1">Enhances virion budding by targeting host CD4 and Tetherin/BST2 to proteasome degradation. Degradation of CD4 prevents any unwanted premature interactions between viral Env and its host receptor CD4 in the endoplasmic reticulum. Degradation of antiretroviral protein Tetherin/BST2 is important for virion budding, as BST2 tethers new viral particles to the host cell membrane. Mechanistically, Vpu bridges either CD4 or BST2 to BTRC, a substrate recognition subunit of the Skp1/Cullin/F-box protein E3 ubiquitin ligase, induces their ubiquitination and subsequent proteasomal degradation. The alteration of the E3 ligase specificity by Vpu seems to promote the degradation of host IKBKB, leading to NF-kappa-B down-regulation and subsequent apoptosis. Acts as a viroporin that forms an oligomeric ion channel in membranes. Modulates the host DNA repair mechanisms to promote degradation of nuclear viral cDNA in cells that are already productively infected in order to suppress immune sensing and proviral hyper-integration (superinfection). Manipulates PML-NBs and modulates SUMOylation of host BLM protein thereby enhancing its DNA-end processing activity toward viral unintegrated linear DNA. Also inhibits RAD52-mediated homologous repair of viral cDNA, preventing the generation of dead-end circular forms of single copies of the long terminal repeat and permitting sustained nucleolytic attack.</text>
</comment>
<comment type="activity regulation">
    <text evidence="1">Ion channel activity is inhibited by hexamethylene amiloride in vitro.</text>
</comment>
<comment type="subunit">
    <text evidence="1">Homopentamer. Interacts with host CD4 and BRTC; these interactions induce proteasomal degradation of CD4. Interacts with host BST2; this interaction leads to the degradation of host BST2. Interacts with host FBXW11. Interacts with host AP1M1; this interaction plays a role in the mistrafficking and subsequent degradation of host BST2. Interacts with host RANBP2; this interaction allows Vpu to down-regulate host BLM sumoylation.</text>
</comment>
<comment type="subcellular location">
    <subcellularLocation>
        <location evidence="1">Host membrane</location>
        <topology evidence="1">Single-pass type I membrane protein</topology>
    </subcellularLocation>
</comment>
<comment type="domain">
    <text evidence="1">The N-terminus and transmembrane domains are required for self-oligomerization and proper virion budding, whereas the cytoplasmic domain is required for CD4 degradation. The cytoplasmic domain is composed of 2 amphipathic alpha helix that form a U-shape.</text>
</comment>
<comment type="PTM">
    <text evidence="1">Phosphorylated by host CK2. This phosphorylation is necessary for interaction with human BTRC and degradation of CD4.</text>
</comment>
<comment type="miscellaneous">
    <text evidence="1">HIV-1 lineages are divided in three main groups, M (for Major), O (for Outlier), and N (for New, or Non-M, Non-O). The vast majority of strains found worldwide belong to the group M. Group O seems to be endemic to and largely confined to Cameroon and neighboring countries in West Central Africa, where these viruses represent a small minority of HIV-1 strains. The group N is represented by a limited number of isolates from Cameroonian persons. The group M is further subdivided in 9 clades or subtypes (A to D, F to H, J and K).</text>
</comment>
<comment type="similarity">
    <text evidence="1">Belongs to the HIV-1 VPU protein family.</text>
</comment>
<evidence type="ECO:0000255" key="1">
    <source>
        <dbReference type="HAMAP-Rule" id="MF_04082"/>
    </source>
</evidence>
<evidence type="ECO:0000256" key="2">
    <source>
        <dbReference type="SAM" id="MobiDB-lite"/>
    </source>
</evidence>
<organismHost>
    <name type="scientific">Homo sapiens</name>
    <name type="common">Human</name>
    <dbReference type="NCBI Taxonomy" id="9606"/>
</organismHost>
<reference key="1">
    <citation type="journal article" date="1989" name="Gene">
        <title>Nucleotide sequence of HIV1-NDK: a highly cytopathic strain of the human immunodeficiency virus.</title>
        <authorList>
            <person name="Spire B."/>
            <person name="Sire J."/>
            <person name="Zachar V."/>
            <person name="Rey F."/>
            <person name="Barre-Sinoussi F."/>
            <person name="Galibert F."/>
            <person name="Hampe A."/>
            <person name="Chermann J.C."/>
        </authorList>
    </citation>
    <scope>NUCLEOTIDE SEQUENCE [GENOMIC DNA]</scope>
</reference>
<accession>P18806</accession>
<keyword id="KW-0014">AIDS</keyword>
<keyword id="KW-0053">Apoptosis</keyword>
<keyword id="KW-1043">Host membrane</keyword>
<keyword id="KW-0945">Host-virus interaction</keyword>
<keyword id="KW-1090">Inhibition of host innate immune response by virus</keyword>
<keyword id="KW-1084">Inhibition of host tetherin by virus</keyword>
<keyword id="KW-0407">Ion channel</keyword>
<keyword id="KW-0406">Ion transport</keyword>
<keyword id="KW-0472">Membrane</keyword>
<keyword id="KW-0597">Phosphoprotein</keyword>
<keyword id="KW-0812">Transmembrane</keyword>
<keyword id="KW-1133">Transmembrane helix</keyword>
<keyword id="KW-0813">Transport</keyword>
<keyword id="KW-0899">Viral immunoevasion</keyword>
<protein>
    <recommendedName>
        <fullName evidence="1">Protein Vpu</fullName>
    </recommendedName>
    <alternativeName>
        <fullName evidence="1">U ORF protein</fullName>
    </alternativeName>
    <alternativeName>
        <fullName evidence="1">Viral protein U</fullName>
    </alternativeName>
</protein>
<name>VPU_HV1ND</name>
<sequence length="81" mass="9382">MQPLVIIAIAALVVAIIIAIVVWTIVYIEYRRIKRQRKIDCLIDRIRERAEDSGNESEGEREELSKLVEMGHHAPWDVDDL</sequence>
<proteinExistence type="inferred from homology"/>